<reference key="1">
    <citation type="journal article" date="1986" name="DNA">
        <title>Bacillus thuringiensis entomocidal protoxin gene sequence and gene product analysis.</title>
        <authorList>
            <person name="Wabiko H."/>
            <person name="Raymond K.C."/>
            <person name="Bulla L.A. Jr."/>
        </authorList>
    </citation>
    <scope>NUCLEOTIDE SEQUENCE [GENOMIC DNA]</scope>
    <source>
        <strain>1715</strain>
    </source>
</reference>
<reference key="2">
    <citation type="journal article" date="1986" name="Eur. J. Biochem.">
        <title>Structural and functional analysis of a cloned delta endotoxin of Bacillus thuringiensis berliner 1715.</title>
        <authorList>
            <person name="Hoefte H."/>
            <person name="de Greve H."/>
            <person name="Seurinck J."/>
            <person name="Jansens S."/>
            <person name="Mahillon J."/>
            <person name="Ampe C."/>
            <person name="Vandekerckhove J."/>
            <person name="Vanderbruggen H."/>
            <person name="van Montagu M."/>
            <person name="Zabeau M."/>
            <person name="Vaeck M."/>
        </authorList>
    </citation>
    <scope>NUCLEOTIDE SEQUENCE [GENOMIC DNA]</scope>
    <source>
        <strain>1715</strain>
    </source>
</reference>
<keyword id="KW-0749">Sporulation</keyword>
<keyword id="KW-0800">Toxin</keyword>
<keyword id="KW-0843">Virulence</keyword>
<gene>
    <name type="primary">cry1Ab</name>
    <name type="synonym">bt2</name>
    <name type="synonym">cry-1-2</name>
    <name type="synonym">cry1A(b)</name>
    <name type="synonym">cryIA(b)</name>
    <name type="synonym">cryIC1</name>
</gene>
<organism>
    <name type="scientific">Bacillus thuringiensis subsp. berliner</name>
    <dbReference type="NCBI Taxonomy" id="1434"/>
    <lineage>
        <taxon>Bacteria</taxon>
        <taxon>Bacillati</taxon>
        <taxon>Bacillota</taxon>
        <taxon>Bacilli</taxon>
        <taxon>Bacillales</taxon>
        <taxon>Bacillaceae</taxon>
        <taxon>Bacillus</taxon>
        <taxon>Bacillus cereus group</taxon>
    </lineage>
</organism>
<comment type="function">
    <text>Promotes colloidosmotic lysis by binding to the midgut epithelial cells of many lepidopteran larvae.</text>
</comment>
<comment type="interaction">
    <interactant intactId="EBI-15654527">
        <id>P0A371</id>
    </interactant>
    <interactant intactId="EBI-15654512">
        <id>Q8MZK3</id>
    </interactant>
    <organismsDiffer>true</organismsDiffer>
    <experiments>2</experiments>
</comment>
<comment type="developmental stage">
    <text>The crystal protein is produced during sporulation and is accumulated both as an inclusion and as part of the spore coat.</text>
</comment>
<comment type="miscellaneous">
    <text>Toxic segment of the protein is located in the N-terminus.</text>
</comment>
<comment type="similarity">
    <text evidence="1">Belongs to the delta endotoxin family.</text>
</comment>
<dbReference type="EMBL" id="M13898">
    <property type="protein sequence ID" value="AAA22330.1"/>
    <property type="molecule type" value="Genomic_DNA"/>
</dbReference>
<dbReference type="EMBL" id="X04698">
    <property type="protein sequence ID" value="CAA28405.1"/>
    <property type="molecule type" value="Genomic_DNA"/>
</dbReference>
<dbReference type="SMR" id="P0A371"/>
<dbReference type="DIP" id="DIP-46475N"/>
<dbReference type="IntAct" id="P0A371">
    <property type="interactions" value="1"/>
</dbReference>
<dbReference type="GO" id="GO:0005102">
    <property type="term" value="F:signaling receptor binding"/>
    <property type="evidence" value="ECO:0007669"/>
    <property type="project" value="InterPro"/>
</dbReference>
<dbReference type="GO" id="GO:0090729">
    <property type="term" value="F:toxin activity"/>
    <property type="evidence" value="ECO:0007669"/>
    <property type="project" value="UniProtKB-KW"/>
</dbReference>
<dbReference type="GO" id="GO:0030435">
    <property type="term" value="P:sporulation resulting in formation of a cellular spore"/>
    <property type="evidence" value="ECO:0007669"/>
    <property type="project" value="UniProtKB-KW"/>
</dbReference>
<dbReference type="GO" id="GO:0001907">
    <property type="term" value="P:symbiont-mediated killing of host cell"/>
    <property type="evidence" value="ECO:0007669"/>
    <property type="project" value="InterPro"/>
</dbReference>
<dbReference type="CDD" id="cd04085">
    <property type="entry name" value="delta_endotoxin_C"/>
    <property type="match status" value="1"/>
</dbReference>
<dbReference type="Gene3D" id="2.60.120.260">
    <property type="entry name" value="Galactose-binding domain-like"/>
    <property type="match status" value="2"/>
</dbReference>
<dbReference type="Gene3D" id="2.100.10.10">
    <property type="entry name" value="Pesticidal crystal protein, central domain"/>
    <property type="match status" value="1"/>
</dbReference>
<dbReference type="Gene3D" id="1.20.190.10">
    <property type="entry name" value="Pesticidal crystal protein, N-terminal domain"/>
    <property type="match status" value="1"/>
</dbReference>
<dbReference type="InterPro" id="IPR048645">
    <property type="entry name" value="Cry1Ac-like_dom-VII"/>
</dbReference>
<dbReference type="InterPro" id="IPR041587">
    <property type="entry name" value="Cry_V"/>
</dbReference>
<dbReference type="InterPro" id="IPR008979">
    <property type="entry name" value="Galactose-bd-like_sf"/>
</dbReference>
<dbReference type="InterPro" id="IPR038979">
    <property type="entry name" value="Pest_crys"/>
</dbReference>
<dbReference type="InterPro" id="IPR054544">
    <property type="entry name" value="Pest_crys_Cry1Aa_dom-IV"/>
</dbReference>
<dbReference type="InterPro" id="IPR005638">
    <property type="entry name" value="Pest_crys_dom-III"/>
</dbReference>
<dbReference type="InterPro" id="IPR005639">
    <property type="entry name" value="Pest_crys_dom_I"/>
</dbReference>
<dbReference type="InterPro" id="IPR036716">
    <property type="entry name" value="Pest_crys_N_sf"/>
</dbReference>
<dbReference type="InterPro" id="IPR036399">
    <property type="entry name" value="Pest_cryst_cen_dom_sf"/>
</dbReference>
<dbReference type="InterPro" id="IPR001178">
    <property type="entry name" value="Pest_cryst_dom_II"/>
</dbReference>
<dbReference type="PANTHER" id="PTHR37003">
    <property type="entry name" value="ENDOTOXIN_N DOMAIN-CONTAINING PROTEIN-RELATED"/>
    <property type="match status" value="1"/>
</dbReference>
<dbReference type="PANTHER" id="PTHR37003:SF2">
    <property type="entry name" value="PESTICIDAL CRYSTAL PROTEIN N-TERMINAL DOMAIN-CONTAINING PROTEIN"/>
    <property type="match status" value="1"/>
</dbReference>
<dbReference type="Pfam" id="PF17997">
    <property type="entry name" value="Cry1Ac_D5"/>
    <property type="match status" value="1"/>
</dbReference>
<dbReference type="Pfam" id="PF21463">
    <property type="entry name" value="Cry1Ac_dom-VII"/>
    <property type="match status" value="1"/>
</dbReference>
<dbReference type="Pfam" id="PF03944">
    <property type="entry name" value="Endotoxin_C"/>
    <property type="match status" value="1"/>
</dbReference>
<dbReference type="Pfam" id="PF18449">
    <property type="entry name" value="Endotoxin_C2"/>
    <property type="match status" value="1"/>
</dbReference>
<dbReference type="Pfam" id="PF00555">
    <property type="entry name" value="Endotoxin_M"/>
    <property type="match status" value="1"/>
</dbReference>
<dbReference type="Pfam" id="PF03945">
    <property type="entry name" value="Endotoxin_N"/>
    <property type="match status" value="1"/>
</dbReference>
<dbReference type="SUPFAM" id="SSF51096">
    <property type="entry name" value="delta-Endotoxin (insectocide), middle domain"/>
    <property type="match status" value="1"/>
</dbReference>
<dbReference type="SUPFAM" id="SSF56849">
    <property type="entry name" value="delta-Endotoxin (insectocide), N-terminal domain"/>
    <property type="match status" value="1"/>
</dbReference>
<dbReference type="SUPFAM" id="SSF49785">
    <property type="entry name" value="Galactose-binding domain-like"/>
    <property type="match status" value="1"/>
</dbReference>
<name>CR1AB_BACTB</name>
<protein>
    <recommendedName>
        <fullName>Pesticidal crystal protein Cry1Ab</fullName>
    </recommendedName>
    <alternativeName>
        <fullName>130 kDa crystal protein</fullName>
    </alternativeName>
    <alternativeName>
        <fullName>Crystaline entomocidal protoxin</fullName>
    </alternativeName>
    <alternativeName>
        <fullName>Insecticidal delta-endotoxin CryIA(b)</fullName>
    </alternativeName>
</protein>
<evidence type="ECO:0000305" key="1"/>
<sequence length="1155" mass="130624">MDNNPNINECIPYNCLSNPEVEVLGGERIETGYTPIDISLSLTQFLLSEFVPGAGFVLGLVDIIWGIFGPSQWDAFLVQIEQLINQRIEEFARNQAISRLEGLSNLYQIYAESFREWEADPTNPALREEMRIQFNDMNSALTTAIPLFAVQNYQVPLLSVYVQAANLHLSVLRDVSVFGQRWGFDAATINSRYNDLTRLIGNYTDHAVRWYNTGLERVWGPDSRDWIRYNQFRRELTLTVLDIVSLFPNYDSRTYPIRTVSQLTREIYTNPVLENFDGSFRGSAQGIEGSIRSPHLMDILNSITIYTDAHRGEYYWSGHQIMASPVGFSGPEFTFPLYGTMGNAAPQQRIVAQLGQGVYRTLSSTLYRRPFNIGINNQQLSVLDGTEFAYGTSSNLPSAVYRKSGTVDSLDEIPPQNNNVPPRQGFSHRLSHVSMFRSGFSNSSVSIIRAPMFSWIHRSAEFNNIIPSSQITQIPLTKSTNLGSGTSVVKGPGFTGGDILRRTSPGQISTLRVNITAPLSQRYRVRIRYASTTNLQFHTSIDGRPINQGNFSATMSSGSNLQSGSFRTVGFTTPFNFSNGSSVFTLSAHVFNSGNEVYIDRIEFVPAEVTFEAEYDLERAQKAVNELFTSSNQIGLKTDVTDYHIDQVSNLVECLSDEFCLDEKKELSEKVKHAKRLSDERNLLQDPNFRGINRQLDRGWRGSTDITIQGGDDVFKENYVTLLGTFDECYPTYLYQKIDESKLKAYTRYQLRGYIEDSQDLEIYLIRYNAKHETVNVPGTGSLWPLSAPSPIGKCAHHSHHFSLDIDVGCTDLNEDLGVWVIFKIKTQDGHARLGNLEFLEEKPLVGEALARVKRAEKKWRDKREKLEWETNIVYKEAKESVDALFVNSQYDRLQADTNIAMIHAADKRVHSIREAYLPELSVIPGVNAAIFEELEGRIFTAFSLYDARNVIKNGDFNNGLSCWNVKGHVDVEEQNNHRSVLVVPEWEAEVSQEVRVCPGRGYILRVTAYKEGYGEGCVTIHEIENNTDELKFSNCVEEEVYPNNTVTCNDYTATQEEYEGTYTSRNRGYDGAYESNSSVPADYASAYEEKAYTDGRRDNPCESNRGYGDYTPLPAGYVTKELEYFPETDKVWIEIGETEGTFIVDSVELLLMEE</sequence>
<proteinExistence type="evidence at protein level"/>
<feature type="chain" id="PRO_0000174022" description="Pesticidal crystal protein Cry1Ab">
    <location>
        <begin position="1"/>
        <end position="1155"/>
    </location>
</feature>
<feature type="sequence conflict" description="In Ref. 2; CAA28405." evidence="1" ref="2">
    <original>P</original>
    <variation>L</variation>
    <location>
        <position position="731"/>
    </location>
</feature>
<feature type="sequence conflict" description="In Ref. 2; CAA28405." evidence="1" ref="2">
    <original>P</original>
    <variation>R</variation>
    <location>
        <position position="785"/>
    </location>
</feature>
<accession>P0A371</accession>
<accession>P06577</accession>
<accession>P06578</accession>
<accession>P09663</accession>
<accession>P09666</accession>
<accession>P09667</accession>
<accession>P21257</accession>
<accession>Q45789</accession>